<feature type="chain" id="PRO_0000065027" description="Monocyclic monoterpene ketone monooxygenase">
    <location>
        <begin position="1"/>
        <end position="31" status="greater than"/>
    </location>
</feature>
<feature type="binding site">
    <location>
        <begin position="20"/>
        <end position="25"/>
    </location>
    <ligand>
        <name>FAD</name>
        <dbReference type="ChEBI" id="CHEBI:57692"/>
    </ligand>
</feature>
<feature type="unsure residue" description="T or G">
    <location>
        <position position="8"/>
    </location>
</feature>
<feature type="non-terminal residue">
    <location>
        <position position="31"/>
    </location>
</feature>
<organism>
    <name type="scientific">Rhodococcus erythropolis</name>
    <name type="common">Arthrobacter picolinophilus</name>
    <dbReference type="NCBI Taxonomy" id="1833"/>
    <lineage>
        <taxon>Bacteria</taxon>
        <taxon>Bacillati</taxon>
        <taxon>Actinomycetota</taxon>
        <taxon>Actinomycetes</taxon>
        <taxon>Mycobacteriales</taxon>
        <taxon>Nocardiaceae</taxon>
        <taxon>Rhodococcus</taxon>
        <taxon>Rhodococcus erythropolis group</taxon>
    </lineage>
</organism>
<sequence>MQTIPSTTETAADFDAVIXGAGFXGLYALHR</sequence>
<accession>P82679</accession>
<name>MMKMO_RHOER</name>
<proteinExistence type="evidence at protein level"/>
<evidence type="ECO:0000269" key="1">
    <source>
    </source>
</evidence>
<evidence type="ECO:0000303" key="2">
    <source>
    </source>
</evidence>
<evidence type="ECO:0000305" key="3">
    <source>
    </source>
</evidence>
<keyword id="KW-0903">Direct protein sequencing</keyword>
<keyword id="KW-0274">FAD</keyword>
<keyword id="KW-0285">Flavoprotein</keyword>
<keyword id="KW-0521">NADP</keyword>
<keyword id="KW-0560">Oxidoreductase</keyword>
<comment type="function">
    <text evidence="1">Catalyzes the NADPH- and oxygen-dependent oxidation of the monocyclic monoterpene ketones 1-hydroxy-2-oxolimonene, dihydrocarvone and menthone. Is able to convert all enantiomers of these natural substrates with almost equal efficiency. Is thus involved in the conversion of the monocyclic monoterpene ketone intermediates formed in the degradation pathways of all stereoisomers of three different monocyclic monoterpenes, i.e. limonene, (dihydro)carveol and menthol, which likely make R.erythropolis able to grow on these compounds as the sole source of carbon and energy.</text>
</comment>
<comment type="catalytic activity">
    <reaction evidence="1">
        <text>1-hydroxylimonen-2-one + NADPH + O2 = 3-isopropenyl-6-oxoheptanoate + NADP(+) + H2O</text>
        <dbReference type="Rhea" id="RHEA:55004"/>
        <dbReference type="ChEBI" id="CHEBI:15377"/>
        <dbReference type="ChEBI" id="CHEBI:15379"/>
        <dbReference type="ChEBI" id="CHEBI:50246"/>
        <dbReference type="ChEBI" id="CHEBI:57783"/>
        <dbReference type="ChEBI" id="CHEBI:58349"/>
        <dbReference type="ChEBI" id="CHEBI:64234"/>
        <dbReference type="EC" id="1.14.13.105"/>
    </reaction>
    <physiologicalReaction direction="left-to-right" evidence="3">
        <dbReference type="Rhea" id="RHEA:55005"/>
    </physiologicalReaction>
</comment>
<comment type="catalytic activity">
    <reaction evidence="1">
        <text>(1R,4S)-1-hydroxylimonen-2-one + NADPH + O2 + H(+) = (4S,7S)-7-hydroxy-4-isopropenyl-7-methyloxepan-2-one + NADP(+) + H2O</text>
        <dbReference type="Rhea" id="RHEA:53412"/>
        <dbReference type="ChEBI" id="CHEBI:15377"/>
        <dbReference type="ChEBI" id="CHEBI:15378"/>
        <dbReference type="ChEBI" id="CHEBI:15379"/>
        <dbReference type="ChEBI" id="CHEBI:50245"/>
        <dbReference type="ChEBI" id="CHEBI:57783"/>
        <dbReference type="ChEBI" id="CHEBI:58349"/>
        <dbReference type="ChEBI" id="CHEBI:138596"/>
        <dbReference type="EC" id="1.14.13.105"/>
    </reaction>
    <physiologicalReaction direction="left-to-right" evidence="3">
        <dbReference type="Rhea" id="RHEA:53413"/>
    </physiologicalReaction>
</comment>
<comment type="catalytic activity">
    <reaction evidence="1">
        <text>(1S,4R)-1-hydroxylimonen-2-one + NADPH + O2 + H(+) = (4R,7R)-7-hydroxy-4-isopropenyl-7-methyloxepan-2-one + NADP(+) + H2O</text>
        <dbReference type="Rhea" id="RHEA:53408"/>
        <dbReference type="ChEBI" id="CHEBI:15377"/>
        <dbReference type="ChEBI" id="CHEBI:15378"/>
        <dbReference type="ChEBI" id="CHEBI:15379"/>
        <dbReference type="ChEBI" id="CHEBI:38249"/>
        <dbReference type="ChEBI" id="CHEBI:57783"/>
        <dbReference type="ChEBI" id="CHEBI:58349"/>
        <dbReference type="ChEBI" id="CHEBI:138597"/>
        <dbReference type="EC" id="1.14.13.105"/>
    </reaction>
    <physiologicalReaction direction="left-to-right" evidence="3">
        <dbReference type="Rhea" id="RHEA:53409"/>
    </physiologicalReaction>
</comment>
<comment type="catalytic activity">
    <reaction evidence="1">
        <text>(1R,4R)-dihydrocarvone + NADPH + O2 + H(+) = (4R,7R)-4-isopropenyl-7-methyloxepan-2-one + NADP(+) + H2O</text>
        <dbReference type="Rhea" id="RHEA:52824"/>
        <dbReference type="ChEBI" id="CHEBI:154"/>
        <dbReference type="ChEBI" id="CHEBI:228"/>
        <dbReference type="ChEBI" id="CHEBI:15377"/>
        <dbReference type="ChEBI" id="CHEBI:15378"/>
        <dbReference type="ChEBI" id="CHEBI:15379"/>
        <dbReference type="ChEBI" id="CHEBI:57783"/>
        <dbReference type="ChEBI" id="CHEBI:58349"/>
        <dbReference type="EC" id="1.14.13.105"/>
    </reaction>
    <physiologicalReaction direction="left-to-right" evidence="3">
        <dbReference type="Rhea" id="RHEA:52825"/>
    </physiologicalReaction>
</comment>
<comment type="catalytic activity">
    <reaction evidence="1">
        <text>(1S,4R)-menthone + NADPH + O2 + H(+) = (4S,7R)-7-isopropyl-4-methyloxepan-2-one + NADP(+) + H2O</text>
        <dbReference type="Rhea" id="RHEA:54872"/>
        <dbReference type="ChEBI" id="CHEBI:31"/>
        <dbReference type="ChEBI" id="CHEBI:15377"/>
        <dbReference type="ChEBI" id="CHEBI:15378"/>
        <dbReference type="ChEBI" id="CHEBI:15379"/>
        <dbReference type="ChEBI" id="CHEBI:57783"/>
        <dbReference type="ChEBI" id="CHEBI:58349"/>
        <dbReference type="ChEBI" id="CHEBI:138383"/>
    </reaction>
    <physiologicalReaction direction="left-to-right" evidence="3">
        <dbReference type="Rhea" id="RHEA:54873"/>
    </physiologicalReaction>
</comment>
<comment type="catalytic activity">
    <reaction evidence="1">
        <text>(1R,4S)-menthone + NADPH + O2 + H(+) = (4R,7S)-7-isopropyl-4-methyloxepan-2-one + NADP(+) + H2O</text>
        <dbReference type="Rhea" id="RHEA:32431"/>
        <dbReference type="ChEBI" id="CHEBI:15377"/>
        <dbReference type="ChEBI" id="CHEBI:15378"/>
        <dbReference type="ChEBI" id="CHEBI:15379"/>
        <dbReference type="ChEBI" id="CHEBI:15410"/>
        <dbReference type="ChEBI" id="CHEBI:50250"/>
        <dbReference type="ChEBI" id="CHEBI:57783"/>
        <dbReference type="ChEBI" id="CHEBI:58349"/>
        <dbReference type="EC" id="1.14.13.105"/>
    </reaction>
    <physiologicalReaction direction="left-to-right" evidence="3">
        <dbReference type="Rhea" id="RHEA:32432"/>
    </physiologicalReaction>
</comment>
<comment type="catalytic activity">
    <reaction evidence="1">
        <text>(1S,4R)-isodihydrocarvone + NADPH + O2 + H(+) = (3S,6R)-6-isopropenyl-3-methyloxepan-2-one + NADP(+) + H2O</text>
        <dbReference type="Rhea" id="RHEA:52828"/>
        <dbReference type="ChEBI" id="CHEBI:166"/>
        <dbReference type="ChEBI" id="CHEBI:15377"/>
        <dbReference type="ChEBI" id="CHEBI:15378"/>
        <dbReference type="ChEBI" id="CHEBI:15379"/>
        <dbReference type="ChEBI" id="CHEBI:57783"/>
        <dbReference type="ChEBI" id="CHEBI:58349"/>
        <dbReference type="ChEBI" id="CHEBI:64232"/>
        <dbReference type="EC" id="1.14.13.105"/>
    </reaction>
    <physiologicalReaction direction="left-to-right" evidence="3">
        <dbReference type="Rhea" id="RHEA:52829"/>
    </physiologicalReaction>
</comment>
<comment type="cofactor">
    <cofactor evidence="1">
        <name>FAD</name>
        <dbReference type="ChEBI" id="CHEBI:57692"/>
    </cofactor>
</comment>
<comment type="biophysicochemical properties">
    <kinetics>
        <KM evidence="1">0.13 mM for (4R)-dihydrocarvone</KM>
        <KM evidence="1">0.01 mM for (1R,4S)-1-hydroxy-2-oxolimonene</KM>
        <KM evidence="1">0.13 mM for (1S,4R)-1-hydroxy-2-oxolimonene</KM>
        <KM evidence="1">0.12 mM for (1R,4S)-menthone</KM>
        <KM evidence="1">0.01 mM for (1S,4R)-menthone</KM>
        <KM evidence="1">0.038 mM for NADPH</KM>
        <text evidence="1">kcat is 3.9 sec(-1) with (4R)-dihydrocarvone as substrate. kcat is 4.9 sec(-1) with (1R,4S)-1-hydroxy-2-oxolimonene as substrate. kcat is 3.9 sec(-1) with (1S,4R)-1-hydroxy-2-oxolimonene as substrate. kcat is 3.6 sec(-1) with (1R,4S)-menthone as substrate. kcat is 6.0 sec(-1) with (1S,4R)-menthone as substrate.</text>
    </kinetics>
    <phDependence>
        <text evidence="1">Optimum pH is 9.5.</text>
    </phDependence>
    <temperatureDependence>
        <text evidence="1">Optimum temperature is about 36 degrees Celsius.</text>
    </temperatureDependence>
</comment>
<comment type="pathway">
    <text evidence="3">Terpene metabolism; monoterpene degradation.</text>
</comment>
<comment type="subunit">
    <text evidence="1">Monomer.</text>
</comment>
<comment type="induction">
    <text evidence="1">Induced by growth on limonene, carveol, dihydrocarveol or (1R,3R,4S)-menthol.</text>
</comment>
<comment type="miscellaneous">
    <text evidence="1">The 7-hydroxy-4-isopropenyl-7-methyloxepan-2-one lactone obtained from 1-hydroxylimonen-2-one is unstable and undergoes a spontaneous rearrangement to 3-isopropenyl-6-oxoheptanoate.</text>
</comment>
<reference key="1">
    <citation type="journal article" date="2000" name="Biochem. J.">
        <title>Purification and characterization of a Baeyer-Villiger mono-oxygenase from Rhodococcus erythropolis DCL14 involved in three different monocyclic monoterpene degradation pathways.</title>
        <authorList>
            <person name="van der Werf M.J."/>
        </authorList>
    </citation>
    <scope>PROTEIN SEQUENCE</scope>
    <scope>FUNCTION</scope>
    <scope>CATALYTIC ACTIVITY</scope>
    <scope>COFACTOR</scope>
    <scope>BIOPHYSICOCHEMICAL PROPERTIES</scope>
    <scope>SUBUNIT</scope>
    <scope>INDUCTION</scope>
    <source>
        <strain>DCL 14</strain>
    </source>
</reference>
<dbReference type="EC" id="1.14.13.105" evidence="1"/>
<dbReference type="SwissLipids" id="SLP:000001722"/>
<dbReference type="SABIO-RK" id="P82679"/>
<dbReference type="UniPathway" id="UPA00137"/>
<dbReference type="GO" id="GO:0004497">
    <property type="term" value="F:monooxygenase activity"/>
    <property type="evidence" value="ECO:0000314"/>
    <property type="project" value="UniProtKB"/>
</dbReference>
<protein>
    <recommendedName>
        <fullName evidence="2">Monocyclic monoterpene ketone monooxygenase</fullName>
        <shortName evidence="2">MMKMO</shortName>
        <ecNumber evidence="1">1.14.13.105</ecNumber>
    </recommendedName>
    <alternativeName>
        <fullName evidence="2">Baeyer-Villiger monooxygenase</fullName>
        <shortName evidence="2">BVMO</shortName>
    </alternativeName>
</protein>